<proteinExistence type="evidence at protein level"/>
<keyword id="KW-0002">3D-structure</keyword>
<keyword id="KW-0025">Alternative splicing</keyword>
<keyword id="KW-0175">Coiled coil</keyword>
<keyword id="KW-0963">Cytoplasm</keyword>
<keyword id="KW-0225">Disease variant</keyword>
<keyword id="KW-0256">Endoplasmic reticulum</keyword>
<keyword id="KW-0333">Golgi apparatus</keyword>
<keyword id="KW-0991">Intellectual disability</keyword>
<keyword id="KW-0445">Lipid transport</keyword>
<keyword id="KW-0446">Lipid-binding</keyword>
<keyword id="KW-0597">Phosphoprotein</keyword>
<keyword id="KW-1267">Proteomics identification</keyword>
<keyword id="KW-1185">Reference proteome</keyword>
<keyword id="KW-0813">Transport</keyword>
<name>CERT_HUMAN</name>
<organism>
    <name type="scientific">Homo sapiens</name>
    <name type="common">Human</name>
    <dbReference type="NCBI Taxonomy" id="9606"/>
    <lineage>
        <taxon>Eukaryota</taxon>
        <taxon>Metazoa</taxon>
        <taxon>Chordata</taxon>
        <taxon>Craniata</taxon>
        <taxon>Vertebrata</taxon>
        <taxon>Euteleostomi</taxon>
        <taxon>Mammalia</taxon>
        <taxon>Eutheria</taxon>
        <taxon>Euarchontoglires</taxon>
        <taxon>Primates</taxon>
        <taxon>Haplorrhini</taxon>
        <taxon>Catarrhini</taxon>
        <taxon>Hominidae</taxon>
        <taxon>Homo</taxon>
    </lineage>
</organism>
<gene>
    <name evidence="25" type="primary">CERT1</name>
    <name type="synonym">CERT</name>
    <name evidence="25" type="synonym">COL4A3BP</name>
    <name type="synonym">STARD11</name>
</gene>
<dbReference type="EMBL" id="AF136450">
    <property type="protein sequence ID" value="AAD30288.1"/>
    <property type="molecule type" value="mRNA"/>
</dbReference>
<dbReference type="EMBL" id="AF232930">
    <property type="protein sequence ID" value="AAG42046.1"/>
    <property type="molecule type" value="mRNA"/>
</dbReference>
<dbReference type="EMBL" id="AF232935">
    <property type="protein sequence ID" value="AAG42051.1"/>
    <property type="molecule type" value="Genomic_DNA"/>
</dbReference>
<dbReference type="EMBL" id="AY453385">
    <property type="protein sequence ID" value="AAR26717.1"/>
    <property type="molecule type" value="mRNA"/>
</dbReference>
<dbReference type="EMBL" id="AY453386">
    <property type="protein sequence ID" value="AAR26718.1"/>
    <property type="molecule type" value="mRNA"/>
</dbReference>
<dbReference type="EMBL" id="AK091851">
    <property type="protein sequence ID" value="BAC03762.1"/>
    <property type="molecule type" value="mRNA"/>
</dbReference>
<dbReference type="EMBL" id="AK096854">
    <property type="protein sequence ID" value="BAG53379.1"/>
    <property type="molecule type" value="mRNA"/>
</dbReference>
<dbReference type="EMBL" id="AK292087">
    <property type="protein sequence ID" value="BAF84776.1"/>
    <property type="molecule type" value="mRNA"/>
</dbReference>
<dbReference type="EMBL" id="AC008897">
    <property type="status" value="NOT_ANNOTATED_CDS"/>
    <property type="molecule type" value="Genomic_DNA"/>
</dbReference>
<dbReference type="EMBL" id="AC112183">
    <property type="status" value="NOT_ANNOTATED_CDS"/>
    <property type="molecule type" value="Genomic_DNA"/>
</dbReference>
<dbReference type="EMBL" id="AC116341">
    <property type="status" value="NOT_ANNOTATED_CDS"/>
    <property type="molecule type" value="Genomic_DNA"/>
</dbReference>
<dbReference type="EMBL" id="CH471084">
    <property type="protein sequence ID" value="EAW95757.1"/>
    <property type="molecule type" value="Genomic_DNA"/>
</dbReference>
<dbReference type="EMBL" id="CH471084">
    <property type="protein sequence ID" value="EAW95760.1"/>
    <property type="molecule type" value="Genomic_DNA"/>
</dbReference>
<dbReference type="EMBL" id="BC000102">
    <property type="protein sequence ID" value="AAH00102.1"/>
    <property type="molecule type" value="mRNA"/>
</dbReference>
<dbReference type="EMBL" id="AB036934">
    <property type="protein sequence ID" value="BAB58974.1"/>
    <property type="molecule type" value="Genomic_DNA"/>
</dbReference>
<dbReference type="EMBL" id="AB036936">
    <property type="protein sequence ID" value="BAB58977.1"/>
    <property type="molecule type" value="Genomic_DNA"/>
</dbReference>
<dbReference type="CCDS" id="CCDS4028.1">
    <molecule id="Q9Y5P4-1"/>
</dbReference>
<dbReference type="CCDS" id="CCDS4029.1">
    <molecule id="Q9Y5P4-2"/>
</dbReference>
<dbReference type="CCDS" id="CCDS47235.1">
    <molecule id="Q9Y5P4-3"/>
</dbReference>
<dbReference type="RefSeq" id="NP_001123577.1">
    <molecule id="Q9Y5P4-3"/>
    <property type="nucleotide sequence ID" value="NM_001130105.1"/>
</dbReference>
<dbReference type="RefSeq" id="NP_001365931.1">
    <molecule id="Q9Y5P4-1"/>
    <property type="nucleotide sequence ID" value="NM_001379002.1"/>
</dbReference>
<dbReference type="RefSeq" id="NP_001365932.1">
    <molecule id="Q9Y5P4-2"/>
    <property type="nucleotide sequence ID" value="NM_001379003.1"/>
</dbReference>
<dbReference type="RefSeq" id="NP_001365958.1">
    <molecule id="Q9Y5P4-1"/>
    <property type="nucleotide sequence ID" value="NM_001379029.1"/>
</dbReference>
<dbReference type="RefSeq" id="NP_005704.1">
    <molecule id="Q9Y5P4-1"/>
    <property type="nucleotide sequence ID" value="NM_005713.3"/>
</dbReference>
<dbReference type="RefSeq" id="NP_112729.1">
    <molecule id="Q9Y5P4-2"/>
    <property type="nucleotide sequence ID" value="NM_031361.3"/>
</dbReference>
<dbReference type="RefSeq" id="XP_006714576.1">
    <property type="nucleotide sequence ID" value="XM_006714513.2"/>
</dbReference>
<dbReference type="RefSeq" id="XP_016864408.1">
    <property type="nucleotide sequence ID" value="XM_017008919.1"/>
</dbReference>
<dbReference type="PDB" id="2E3M">
    <property type="method" value="X-ray"/>
    <property type="resolution" value="2.20 A"/>
    <property type="chains" value="A=347-624"/>
</dbReference>
<dbReference type="PDB" id="2E3N">
    <property type="method" value="X-ray"/>
    <property type="resolution" value="1.40 A"/>
    <property type="chains" value="A=347-624"/>
</dbReference>
<dbReference type="PDB" id="2E3O">
    <property type="method" value="X-ray"/>
    <property type="resolution" value="1.55 A"/>
    <property type="chains" value="A=347-624"/>
</dbReference>
<dbReference type="PDB" id="2E3P">
    <property type="method" value="X-ray"/>
    <property type="resolution" value="1.40 A"/>
    <property type="chains" value="A/B=347-624"/>
</dbReference>
<dbReference type="PDB" id="2E3Q">
    <property type="method" value="X-ray"/>
    <property type="resolution" value="2.08 A"/>
    <property type="chains" value="A=347-624"/>
</dbReference>
<dbReference type="PDB" id="2E3R">
    <property type="method" value="X-ray"/>
    <property type="resolution" value="1.65 A"/>
    <property type="chains" value="A/B=347-624"/>
</dbReference>
<dbReference type="PDB" id="2E3S">
    <property type="method" value="X-ray"/>
    <property type="resolution" value="1.94 A"/>
    <property type="chains" value="A=347-624"/>
</dbReference>
<dbReference type="PDB" id="2RSG">
    <property type="method" value="NMR"/>
    <property type="chains" value="A=24-117"/>
</dbReference>
<dbReference type="PDB" id="2Z9Y">
    <property type="method" value="X-ray"/>
    <property type="resolution" value="1.80 A"/>
    <property type="chains" value="A=347-624"/>
</dbReference>
<dbReference type="PDB" id="2Z9Z">
    <property type="method" value="X-ray"/>
    <property type="resolution" value="1.74 A"/>
    <property type="chains" value="A=347-624"/>
</dbReference>
<dbReference type="PDB" id="3H3Q">
    <property type="method" value="X-ray"/>
    <property type="resolution" value="2.00 A"/>
    <property type="chains" value="A/B=347-624"/>
</dbReference>
<dbReference type="PDB" id="3H3R">
    <property type="method" value="X-ray"/>
    <property type="resolution" value="1.85 A"/>
    <property type="chains" value="A/B=347-624"/>
</dbReference>
<dbReference type="PDB" id="3H3S">
    <property type="method" value="X-ray"/>
    <property type="resolution" value="1.66 A"/>
    <property type="chains" value="A/B=347-624"/>
</dbReference>
<dbReference type="PDB" id="3H3T">
    <property type="method" value="X-ray"/>
    <property type="resolution" value="2.40 A"/>
    <property type="chains" value="A/B=347-624"/>
</dbReference>
<dbReference type="PDB" id="4HHV">
    <property type="method" value="X-ray"/>
    <property type="resolution" value="1.75 A"/>
    <property type="chains" value="A/B=20-121"/>
</dbReference>
<dbReference type="PDB" id="5JJD">
    <property type="method" value="X-ray"/>
    <property type="resolution" value="2.40 A"/>
    <property type="chains" value="A=20-122, B=385-624"/>
</dbReference>
<dbReference type="PDB" id="5ZYG">
    <property type="method" value="X-ray"/>
    <property type="resolution" value="1.80 A"/>
    <property type="chains" value="A=390-624"/>
</dbReference>
<dbReference type="PDB" id="5ZYH">
    <property type="method" value="X-ray"/>
    <property type="resolution" value="1.95 A"/>
    <property type="chains" value="A=390-624"/>
</dbReference>
<dbReference type="PDB" id="5ZYI">
    <property type="method" value="X-ray"/>
    <property type="resolution" value="1.90 A"/>
    <property type="chains" value="A=390-624"/>
</dbReference>
<dbReference type="PDB" id="5ZYJ">
    <property type="method" value="X-ray"/>
    <property type="resolution" value="1.90 A"/>
    <property type="chains" value="A=390-624"/>
</dbReference>
<dbReference type="PDB" id="5ZYK">
    <property type="method" value="X-ray"/>
    <property type="resolution" value="1.55 A"/>
    <property type="chains" value="A=390-624"/>
</dbReference>
<dbReference type="PDB" id="5ZYL">
    <property type="method" value="X-ray"/>
    <property type="resolution" value="1.80 A"/>
    <property type="chains" value="A=390-624"/>
</dbReference>
<dbReference type="PDB" id="5ZYM">
    <property type="method" value="X-ray"/>
    <property type="resolution" value="1.90 A"/>
    <property type="chains" value="A=390-624"/>
</dbReference>
<dbReference type="PDB" id="6IEZ">
    <property type="method" value="X-ray"/>
    <property type="resolution" value="1.90 A"/>
    <property type="chains" value="A=390-624"/>
</dbReference>
<dbReference type="PDB" id="6IF0">
    <property type="method" value="X-ray"/>
    <property type="resolution" value="1.80 A"/>
    <property type="chains" value="A=390-624"/>
</dbReference>
<dbReference type="PDB" id="6J0O">
    <property type="method" value="X-ray"/>
    <property type="resolution" value="1.80 A"/>
    <property type="chains" value="A=390-624"/>
</dbReference>
<dbReference type="PDB" id="6J81">
    <property type="method" value="X-ray"/>
    <property type="resolution" value="1.80 A"/>
    <property type="chains" value="A=390-624"/>
</dbReference>
<dbReference type="PDBsum" id="2E3M"/>
<dbReference type="PDBsum" id="2E3N"/>
<dbReference type="PDBsum" id="2E3O"/>
<dbReference type="PDBsum" id="2E3P"/>
<dbReference type="PDBsum" id="2E3Q"/>
<dbReference type="PDBsum" id="2E3R"/>
<dbReference type="PDBsum" id="2E3S"/>
<dbReference type="PDBsum" id="2RSG"/>
<dbReference type="PDBsum" id="2Z9Y"/>
<dbReference type="PDBsum" id="2Z9Z"/>
<dbReference type="PDBsum" id="3H3Q"/>
<dbReference type="PDBsum" id="3H3R"/>
<dbReference type="PDBsum" id="3H3S"/>
<dbReference type="PDBsum" id="3H3T"/>
<dbReference type="PDBsum" id="4HHV"/>
<dbReference type="PDBsum" id="5JJD"/>
<dbReference type="PDBsum" id="5ZYG"/>
<dbReference type="PDBsum" id="5ZYH"/>
<dbReference type="PDBsum" id="5ZYI"/>
<dbReference type="PDBsum" id="5ZYJ"/>
<dbReference type="PDBsum" id="5ZYK"/>
<dbReference type="PDBsum" id="5ZYL"/>
<dbReference type="PDBsum" id="5ZYM"/>
<dbReference type="PDBsum" id="6IEZ"/>
<dbReference type="PDBsum" id="6IF0"/>
<dbReference type="PDBsum" id="6J0O"/>
<dbReference type="PDBsum" id="6J81"/>
<dbReference type="BMRB" id="Q9Y5P4"/>
<dbReference type="SASBDB" id="Q9Y5P4"/>
<dbReference type="SMR" id="Q9Y5P4"/>
<dbReference type="BioGRID" id="115396">
    <property type="interactions" value="58"/>
</dbReference>
<dbReference type="ELM" id="Q9Y5P4"/>
<dbReference type="FunCoup" id="Q9Y5P4">
    <property type="interactions" value="4925"/>
</dbReference>
<dbReference type="IntAct" id="Q9Y5P4">
    <property type="interactions" value="45"/>
</dbReference>
<dbReference type="MINT" id="Q9Y5P4"/>
<dbReference type="STRING" id="9606.ENSP00000383996"/>
<dbReference type="BindingDB" id="Q9Y5P4"/>
<dbReference type="ChEMBL" id="CHEMBL3399913"/>
<dbReference type="SwissLipids" id="SLP:000000407"/>
<dbReference type="TCDB" id="2.D.1.1.10">
    <property type="family name" value="the pi4p/ps counter transporter (p/p-ct) family"/>
</dbReference>
<dbReference type="iPTMnet" id="Q9Y5P4"/>
<dbReference type="PhosphoSitePlus" id="Q9Y5P4"/>
<dbReference type="BioMuta" id="COL4A3BP"/>
<dbReference type="DMDM" id="20978413"/>
<dbReference type="jPOST" id="Q9Y5P4"/>
<dbReference type="MassIVE" id="Q9Y5P4"/>
<dbReference type="PaxDb" id="9606-ENSP00000369862"/>
<dbReference type="PeptideAtlas" id="Q9Y5P4"/>
<dbReference type="ProteomicsDB" id="86463">
    <molecule id="Q9Y5P4-1"/>
</dbReference>
<dbReference type="ProteomicsDB" id="86464">
    <molecule id="Q9Y5P4-2"/>
</dbReference>
<dbReference type="ProteomicsDB" id="86465">
    <molecule id="Q9Y5P4-3"/>
</dbReference>
<dbReference type="Pumba" id="Q9Y5P4"/>
<dbReference type="Antibodypedia" id="24390">
    <property type="antibodies" value="364 antibodies from 34 providers"/>
</dbReference>
<dbReference type="DNASU" id="10087"/>
<dbReference type="Ensembl" id="ENST00000261415.12">
    <molecule id="Q9Y5P4-1"/>
    <property type="protein sequence ID" value="ENSP00000261415.8"/>
    <property type="gene ID" value="ENSG00000113163.19"/>
</dbReference>
<dbReference type="Ensembl" id="ENST00000405807.10">
    <molecule id="Q9Y5P4-3"/>
    <property type="protein sequence ID" value="ENSP00000383996.4"/>
    <property type="gene ID" value="ENSG00000113163.19"/>
</dbReference>
<dbReference type="Ensembl" id="ENST00000643780.2">
    <molecule id="Q9Y5P4-1"/>
    <property type="protein sequence ID" value="ENSP00000495760.1"/>
    <property type="gene ID" value="ENSG00000113163.19"/>
</dbReference>
<dbReference type="Ensembl" id="ENST00000644072.2">
    <molecule id="Q9Y5P4-1"/>
    <property type="protein sequence ID" value="ENSP00000494110.2"/>
    <property type="gene ID" value="ENSG00000113163.19"/>
</dbReference>
<dbReference type="Ensembl" id="ENST00000644445.1">
    <molecule id="Q9Y5P4-2"/>
    <property type="protein sequence ID" value="ENSP00000496243.1"/>
    <property type="gene ID" value="ENSG00000113163.19"/>
</dbReference>
<dbReference type="Ensembl" id="ENST00000645483.1">
    <molecule id="Q9Y5P4-2"/>
    <property type="protein sequence ID" value="ENSP00000493563.1"/>
    <property type="gene ID" value="ENSG00000113163.19"/>
</dbReference>
<dbReference type="Ensembl" id="ENST00000646511.1">
    <molecule id="Q9Y5P4-2"/>
    <property type="protein sequence ID" value="ENSP00000495446.1"/>
    <property type="gene ID" value="ENSG00000113163.19"/>
</dbReference>
<dbReference type="GeneID" id="10087"/>
<dbReference type="KEGG" id="hsa:10087"/>
<dbReference type="MANE-Select" id="ENST00000643780.2">
    <property type="protein sequence ID" value="ENSP00000495760.1"/>
    <property type="RefSeq nucleotide sequence ID" value="NM_001379029.1"/>
    <property type="RefSeq protein sequence ID" value="NP_001365958.1"/>
</dbReference>
<dbReference type="UCSC" id="uc003kds.4">
    <molecule id="Q9Y5P4-1"/>
    <property type="organism name" value="human"/>
</dbReference>
<dbReference type="AGR" id="HGNC:2205"/>
<dbReference type="CTD" id="10087"/>
<dbReference type="DisGeNET" id="10087"/>
<dbReference type="GeneCards" id="CERT1"/>
<dbReference type="HGNC" id="HGNC:2205">
    <property type="gene designation" value="CERT1"/>
</dbReference>
<dbReference type="HPA" id="ENSG00000113163">
    <property type="expression patterns" value="Low tissue specificity"/>
</dbReference>
<dbReference type="MalaCards" id="CERT1"/>
<dbReference type="MIM" id="604677">
    <property type="type" value="gene"/>
</dbReference>
<dbReference type="MIM" id="616351">
    <property type="type" value="phenotype"/>
</dbReference>
<dbReference type="neXtProt" id="NX_Q9Y5P4"/>
<dbReference type="OpenTargets" id="ENSG00000113163"/>
<dbReference type="Orphanet" id="528084">
    <property type="disease" value="Non-specific syndromic intellectual disability"/>
</dbReference>
<dbReference type="PharmGKB" id="PA26720"/>
<dbReference type="VEuPathDB" id="HostDB:ENSG00000113163"/>
<dbReference type="eggNOG" id="KOG1739">
    <property type="taxonomic scope" value="Eukaryota"/>
</dbReference>
<dbReference type="GeneTree" id="ENSGT00940000155123"/>
<dbReference type="HOGENOM" id="CLU_017289_0_0_1"/>
<dbReference type="InParanoid" id="Q9Y5P4"/>
<dbReference type="OMA" id="LETCHRI"/>
<dbReference type="OrthoDB" id="2344588at2759"/>
<dbReference type="PAN-GO" id="Q9Y5P4">
    <property type="GO annotations" value="7 GO annotations based on evolutionary models"/>
</dbReference>
<dbReference type="PhylomeDB" id="Q9Y5P4"/>
<dbReference type="TreeFam" id="TF106160"/>
<dbReference type="BRENDA" id="2.7.11.9">
    <property type="organism ID" value="2681"/>
</dbReference>
<dbReference type="PathwayCommons" id="Q9Y5P4"/>
<dbReference type="Reactome" id="R-HSA-1660661">
    <molecule id="Q9Y5P4-2"/>
    <property type="pathway name" value="Sphingolipid de novo biosynthesis"/>
</dbReference>
<dbReference type="SignaLink" id="Q9Y5P4"/>
<dbReference type="SIGNOR" id="Q9Y5P4"/>
<dbReference type="BioGRID-ORCS" id="10087">
    <property type="hits" value="34 hits in 1152 CRISPR screens"/>
</dbReference>
<dbReference type="ChiTaRS" id="COL4A3BP">
    <property type="organism name" value="human"/>
</dbReference>
<dbReference type="EvolutionaryTrace" id="Q9Y5P4"/>
<dbReference type="GeneWiki" id="COL4A3BP"/>
<dbReference type="GenomeRNAi" id="10087"/>
<dbReference type="Pharos" id="Q9Y5P4">
    <property type="development level" value="Tbio"/>
</dbReference>
<dbReference type="PRO" id="PR:Q9Y5P4"/>
<dbReference type="Proteomes" id="UP000005640">
    <property type="component" value="Chromosome 5"/>
</dbReference>
<dbReference type="RNAct" id="Q9Y5P4">
    <property type="molecule type" value="protein"/>
</dbReference>
<dbReference type="Bgee" id="ENSG00000113163">
    <property type="expression patterns" value="Expressed in sperm and 213 other cell types or tissues"/>
</dbReference>
<dbReference type="ExpressionAtlas" id="Q9Y5P4">
    <property type="expression patterns" value="baseline and differential"/>
</dbReference>
<dbReference type="GO" id="GO:0005829">
    <property type="term" value="C:cytosol"/>
    <property type="evidence" value="ECO:0000318"/>
    <property type="project" value="GO_Central"/>
</dbReference>
<dbReference type="GO" id="GO:0005789">
    <property type="term" value="C:endoplasmic reticulum membrane"/>
    <property type="evidence" value="ECO:0000304"/>
    <property type="project" value="Reactome"/>
</dbReference>
<dbReference type="GO" id="GO:0005794">
    <property type="term" value="C:Golgi apparatus"/>
    <property type="evidence" value="ECO:0000314"/>
    <property type="project" value="HPA"/>
</dbReference>
<dbReference type="GO" id="GO:0005739">
    <property type="term" value="C:mitochondrion"/>
    <property type="evidence" value="ECO:0007669"/>
    <property type="project" value="Ensembl"/>
</dbReference>
<dbReference type="GO" id="GO:0005654">
    <property type="term" value="C:nucleoplasm"/>
    <property type="evidence" value="ECO:0000314"/>
    <property type="project" value="HPA"/>
</dbReference>
<dbReference type="GO" id="GO:1902387">
    <property type="term" value="F:ceramide 1-phosphate binding"/>
    <property type="evidence" value="ECO:0000318"/>
    <property type="project" value="GO_Central"/>
</dbReference>
<dbReference type="GO" id="GO:1902388">
    <property type="term" value="F:ceramide 1-phosphate transfer activity"/>
    <property type="evidence" value="ECO:0000318"/>
    <property type="project" value="GO_Central"/>
</dbReference>
<dbReference type="GO" id="GO:0097001">
    <property type="term" value="F:ceramide binding"/>
    <property type="evidence" value="ECO:0000314"/>
    <property type="project" value="UniProtKB"/>
</dbReference>
<dbReference type="GO" id="GO:0120017">
    <property type="term" value="F:ceramide transfer activity"/>
    <property type="evidence" value="ECO:0000314"/>
    <property type="project" value="GO_Central"/>
</dbReference>
<dbReference type="GO" id="GO:0042802">
    <property type="term" value="F:identical protein binding"/>
    <property type="evidence" value="ECO:0000353"/>
    <property type="project" value="IntAct"/>
</dbReference>
<dbReference type="GO" id="GO:0016301">
    <property type="term" value="F:kinase activity"/>
    <property type="evidence" value="ECO:0007669"/>
    <property type="project" value="Ensembl"/>
</dbReference>
<dbReference type="GO" id="GO:0070273">
    <property type="term" value="F:phosphatidylinositol-4-phosphate binding"/>
    <property type="evidence" value="ECO:0000314"/>
    <property type="project" value="UniProtKB"/>
</dbReference>
<dbReference type="GO" id="GO:0000902">
    <property type="term" value="P:cell morphogenesis"/>
    <property type="evidence" value="ECO:0007669"/>
    <property type="project" value="Ensembl"/>
</dbReference>
<dbReference type="GO" id="GO:0008283">
    <property type="term" value="P:cell population proliferation"/>
    <property type="evidence" value="ECO:0007669"/>
    <property type="project" value="Ensembl"/>
</dbReference>
<dbReference type="GO" id="GO:0006672">
    <property type="term" value="P:ceramide metabolic process"/>
    <property type="evidence" value="ECO:0007669"/>
    <property type="project" value="Ensembl"/>
</dbReference>
<dbReference type="GO" id="GO:0035627">
    <property type="term" value="P:ceramide transport"/>
    <property type="evidence" value="ECO:0000318"/>
    <property type="project" value="GO_Central"/>
</dbReference>
<dbReference type="GO" id="GO:0007029">
    <property type="term" value="P:endoplasmic reticulum organization"/>
    <property type="evidence" value="ECO:0007669"/>
    <property type="project" value="Ensembl"/>
</dbReference>
<dbReference type="GO" id="GO:0035621">
    <property type="term" value="P:ER to Golgi ceramide transport"/>
    <property type="evidence" value="ECO:0000315"/>
    <property type="project" value="UniProtKB"/>
</dbReference>
<dbReference type="GO" id="GO:0003007">
    <property type="term" value="P:heart morphogenesis"/>
    <property type="evidence" value="ECO:0007669"/>
    <property type="project" value="Ensembl"/>
</dbReference>
<dbReference type="GO" id="GO:0006955">
    <property type="term" value="P:immune response"/>
    <property type="evidence" value="ECO:0000303"/>
    <property type="project" value="UniProtKB"/>
</dbReference>
<dbReference type="GO" id="GO:0001701">
    <property type="term" value="P:in utero embryonic development"/>
    <property type="evidence" value="ECO:0007669"/>
    <property type="project" value="Ensembl"/>
</dbReference>
<dbReference type="GO" id="GO:0120009">
    <property type="term" value="P:intermembrane lipid transfer"/>
    <property type="evidence" value="ECO:0000318"/>
    <property type="project" value="GO_Central"/>
</dbReference>
<dbReference type="GO" id="GO:0120012">
    <property type="term" value="P:intermembrane sphingolipid transfer"/>
    <property type="evidence" value="ECO:0000314"/>
    <property type="project" value="UniProtKB"/>
</dbReference>
<dbReference type="GO" id="GO:0055088">
    <property type="term" value="P:lipid homeostasis"/>
    <property type="evidence" value="ECO:0007669"/>
    <property type="project" value="Ensembl"/>
</dbReference>
<dbReference type="GO" id="GO:0007005">
    <property type="term" value="P:mitochondrion organization"/>
    <property type="evidence" value="ECO:0007669"/>
    <property type="project" value="Ensembl"/>
</dbReference>
<dbReference type="GO" id="GO:0006936">
    <property type="term" value="P:muscle contraction"/>
    <property type="evidence" value="ECO:0007669"/>
    <property type="project" value="Ensembl"/>
</dbReference>
<dbReference type="GO" id="GO:0034976">
    <property type="term" value="P:response to endoplasmic reticulum stress"/>
    <property type="evidence" value="ECO:0007669"/>
    <property type="project" value="Ensembl"/>
</dbReference>
<dbReference type="GO" id="GO:0007165">
    <property type="term" value="P:signal transduction"/>
    <property type="evidence" value="ECO:0007669"/>
    <property type="project" value="Ensembl"/>
</dbReference>
<dbReference type="CDD" id="cd13283">
    <property type="entry name" value="PH_GPBP"/>
    <property type="match status" value="1"/>
</dbReference>
<dbReference type="CDD" id="cd08872">
    <property type="entry name" value="START_STARD11-like"/>
    <property type="match status" value="1"/>
</dbReference>
<dbReference type="FunFam" id="2.30.29.30:FF:000104">
    <property type="entry name" value="collagen type IV alpha-3-binding protein-like isoform X2"/>
    <property type="match status" value="1"/>
</dbReference>
<dbReference type="FunFam" id="3.30.530.20:FF:000003">
    <property type="entry name" value="Collagen type IV alpha-3-binding protein-like protein"/>
    <property type="match status" value="1"/>
</dbReference>
<dbReference type="Gene3D" id="3.30.530.20">
    <property type="match status" value="1"/>
</dbReference>
<dbReference type="Gene3D" id="2.30.29.30">
    <property type="entry name" value="Pleckstrin-homology domain (PH domain)/Phosphotyrosine-binding domain (PTB)"/>
    <property type="match status" value="1"/>
</dbReference>
<dbReference type="InterPro" id="IPR011993">
    <property type="entry name" value="PH-like_dom_sf"/>
</dbReference>
<dbReference type="InterPro" id="IPR001849">
    <property type="entry name" value="PH_domain"/>
</dbReference>
<dbReference type="InterPro" id="IPR041952">
    <property type="entry name" value="STARD11_START"/>
</dbReference>
<dbReference type="InterPro" id="IPR023393">
    <property type="entry name" value="START-like_dom_sf"/>
</dbReference>
<dbReference type="InterPro" id="IPR002913">
    <property type="entry name" value="START_lipid-bd_dom"/>
</dbReference>
<dbReference type="InterPro" id="IPR051213">
    <property type="entry name" value="START_lipid_transfer"/>
</dbReference>
<dbReference type="PANTHER" id="PTHR19308:SF53">
    <property type="entry name" value="CERAMIDE TRANSFER PROTEIN"/>
    <property type="match status" value="1"/>
</dbReference>
<dbReference type="PANTHER" id="PTHR19308">
    <property type="entry name" value="PHOSPHATIDYLCHOLINE TRANSFER PROTEIN"/>
    <property type="match status" value="1"/>
</dbReference>
<dbReference type="Pfam" id="PF00169">
    <property type="entry name" value="PH"/>
    <property type="match status" value="1"/>
</dbReference>
<dbReference type="Pfam" id="PF01852">
    <property type="entry name" value="START"/>
    <property type="match status" value="1"/>
</dbReference>
<dbReference type="SMART" id="SM00233">
    <property type="entry name" value="PH"/>
    <property type="match status" value="1"/>
</dbReference>
<dbReference type="SMART" id="SM00234">
    <property type="entry name" value="START"/>
    <property type="match status" value="1"/>
</dbReference>
<dbReference type="SUPFAM" id="SSF55961">
    <property type="entry name" value="Bet v1-like"/>
    <property type="match status" value="1"/>
</dbReference>
<dbReference type="SUPFAM" id="SSF50729">
    <property type="entry name" value="PH domain-like"/>
    <property type="match status" value="1"/>
</dbReference>
<dbReference type="PROSITE" id="PS50003">
    <property type="entry name" value="PH_DOMAIN"/>
    <property type="match status" value="1"/>
</dbReference>
<dbReference type="PROSITE" id="PS50848">
    <property type="entry name" value="START"/>
    <property type="match status" value="1"/>
</dbReference>
<protein>
    <recommendedName>
        <fullName evidence="19 22">Ceramide transfer protein</fullName>
        <shortName evidence="19">hCERT</shortName>
    </recommendedName>
    <alternativeName>
        <fullName evidence="22">Collagen type IV alpha-3-binding protein</fullName>
    </alternativeName>
    <alternativeName>
        <fullName evidence="17">Goodpasture antigen-binding protein</fullName>
        <shortName>GPBP</shortName>
    </alternativeName>
    <alternativeName>
        <fullName>START domain-containing protein 11</fullName>
        <shortName>StARD11</shortName>
    </alternativeName>
    <alternativeName>
        <fullName>StAR-related lipid transfer protein 11</fullName>
    </alternativeName>
</protein>
<comment type="function">
    <text evidence="7 9 10 12">Shelters ceramides and diacylglycerol lipids inside its START domain and mediates the intracellular trafficking of ceramides and diacylglycerol lipids in a non-vesicular manner.</text>
</comment>
<comment type="catalytic activity">
    <reaction evidence="1">
        <text>N-hexadecanoylsphing-4-enine(in) = N-hexadecanoylsphing-4-enine(out)</text>
        <dbReference type="Rhea" id="RHEA:45720"/>
        <dbReference type="ChEBI" id="CHEBI:72959"/>
    </reaction>
</comment>
<comment type="subunit">
    <text evidence="8 16">Interacts with VAPA and VAPB. Interaction with VAPB is less efficient than with VAPA (PubMed:16895911). Interacts (via FFAT motif) with MOSPD2 (via MSP domain) (PubMed:29858488).</text>
</comment>
<comment type="interaction">
    <interactant intactId="EBI-739994">
        <id>Q9Y5P4</id>
    </interactant>
    <interactant intactId="EBI-10306917">
        <id>Q9H568</id>
        <label>ACTL8</label>
    </interactant>
    <organismsDiffer>false</organismsDiffer>
    <experiments>3</experiments>
</comment>
<comment type="interaction">
    <interactant intactId="EBI-739994">
        <id>Q9Y5P4</id>
    </interactant>
    <interactant intactId="EBI-714543">
        <id>Q15041</id>
        <label>ARL6IP1</label>
    </interactant>
    <organismsDiffer>false</organismsDiffer>
    <experiments>5</experiments>
</comment>
<comment type="interaction">
    <interactant intactId="EBI-739994">
        <id>Q9Y5P4</id>
    </interactant>
    <interactant intactId="EBI-748380">
        <id>P78368</id>
        <label>CSNK1G2</label>
    </interactant>
    <organismsDiffer>false</organismsDiffer>
    <experiments>6</experiments>
</comment>
<comment type="interaction">
    <interactant intactId="EBI-739994">
        <id>Q9Y5P4</id>
    </interactant>
    <interactant intactId="EBI-712105">
        <id>Q13352</id>
        <label>ITGB3BP</label>
    </interactant>
    <organismsDiffer>false</organismsDiffer>
    <experiments>4</experiments>
</comment>
<comment type="interaction">
    <interactant intactId="EBI-739994">
        <id>Q9Y5P4</id>
    </interactant>
    <interactant intactId="EBI-740467">
        <id>O95197</id>
        <label>RTN3</label>
    </interactant>
    <organismsDiffer>false</organismsDiffer>
    <experiments>3</experiments>
</comment>
<comment type="interaction">
    <interactant intactId="EBI-739994">
        <id>Q9Y5P4</id>
    </interactant>
    <interactant intactId="EBI-715945">
        <id>Q9NQC3</id>
        <label>RTN4</label>
    </interactant>
    <organismsDiffer>false</organismsDiffer>
    <experiments>3</experiments>
</comment>
<comment type="interaction">
    <interactant intactId="EBI-21199571">
        <id>Q9Y5P4-1</id>
    </interactant>
    <interactant intactId="EBI-2115799">
        <id>P02743</id>
        <label>APCS</label>
    </interactant>
    <organismsDiffer>false</organismsDiffer>
    <experiments>6</experiments>
</comment>
<comment type="interaction">
    <interactant intactId="EBI-11156432">
        <id>Q9Y5P4-2</id>
    </interactant>
    <interactant intactId="EBI-10306917">
        <id>Q9H568</id>
        <label>ACTL8</label>
    </interactant>
    <organismsDiffer>false</organismsDiffer>
    <experiments>3</experiments>
</comment>
<comment type="interaction">
    <interactant intactId="EBI-11156432">
        <id>Q9Y5P4-2</id>
    </interactant>
    <interactant intactId="EBI-2115799">
        <id>P02743</id>
        <label>APCS</label>
    </interactant>
    <organismsDiffer>false</organismsDiffer>
    <experiments>4</experiments>
</comment>
<comment type="interaction">
    <interactant intactId="EBI-11156432">
        <id>Q9Y5P4-2</id>
    </interactant>
    <interactant intactId="EBI-714543">
        <id>Q15041</id>
        <label>ARL6IP1</label>
    </interactant>
    <organismsDiffer>false</organismsDiffer>
    <experiments>3</experiments>
</comment>
<comment type="interaction">
    <interactant intactId="EBI-11156432">
        <id>Q9Y5P4-2</id>
    </interactant>
    <interactant intactId="EBI-7996695">
        <id>Q8WZ55</id>
        <label>BSND</label>
    </interactant>
    <organismsDiffer>false</organismsDiffer>
    <experiments>3</experiments>
</comment>
<comment type="interaction">
    <interactant intactId="EBI-11156432">
        <id>Q9Y5P4-2</id>
    </interactant>
    <interactant intactId="EBI-11156432">
        <id>Q9Y5P4-2</id>
        <label>CERT1</label>
    </interactant>
    <organismsDiffer>false</organismsDiffer>
    <experiments>3</experiments>
</comment>
<comment type="interaction">
    <interactant intactId="EBI-11156432">
        <id>Q9Y5P4-2</id>
    </interactant>
    <interactant intactId="EBI-748380">
        <id>P78368</id>
        <label>CSNK1G2</label>
    </interactant>
    <organismsDiffer>false</organismsDiffer>
    <experiments>4</experiments>
</comment>
<comment type="interaction">
    <interactant intactId="EBI-11156432">
        <id>Q9Y5P4-2</id>
    </interactant>
    <interactant intactId="EBI-1055987">
        <id>Q9UET6</id>
        <label>FTSJ1</label>
    </interactant>
    <organismsDiffer>false</organismsDiffer>
    <experiments>3</experiments>
</comment>
<comment type="interaction">
    <interactant intactId="EBI-11156432">
        <id>Q9Y5P4-2</id>
    </interactant>
    <interactant intactId="EBI-11977115">
        <id>Q9UPX6</id>
        <label>MINAR1</label>
    </interactant>
    <organismsDiffer>false</organismsDiffer>
    <experiments>3</experiments>
</comment>
<comment type="interaction">
    <interactant intactId="EBI-11156432">
        <id>Q9Y5P4-2</id>
    </interactant>
    <interactant intactId="EBI-11339910">
        <id>Q8IYS1</id>
        <label>PM20D2</label>
    </interactant>
    <organismsDiffer>false</organismsDiffer>
    <experiments>3</experiments>
</comment>
<comment type="interaction">
    <interactant intactId="EBI-11156432">
        <id>Q9Y5P4-2</id>
    </interactant>
    <interactant intactId="EBI-14065960">
        <id>Q96HR9-2</id>
        <label>REEP6</label>
    </interactant>
    <organismsDiffer>false</organismsDiffer>
    <experiments>3</experiments>
</comment>
<comment type="interaction">
    <interactant intactId="EBI-11156432">
        <id>Q9Y5P4-2</id>
    </interactant>
    <interactant intactId="EBI-298027">
        <id>Q2TAY7</id>
        <label>SMU1</label>
    </interactant>
    <organismsDiffer>false</organismsDiffer>
    <experiments>3</experiments>
</comment>
<comment type="interaction">
    <interactant intactId="EBI-11156432">
        <id>Q9Y5P4-2</id>
    </interactant>
    <interactant intactId="EBI-11956649">
        <id>P32856-2</id>
        <label>STX2</label>
    </interactant>
    <organismsDiffer>false</organismsDiffer>
    <experiments>3</experiments>
</comment>
<comment type="subcellular location">
    <subcellularLocation>
        <location evidence="8 10">Cytoplasm</location>
    </subcellularLocation>
    <subcellularLocation>
        <location evidence="8 10 16">Golgi apparatus</location>
    </subcellularLocation>
    <subcellularLocation>
        <location evidence="8 10">Endoplasmic reticulum</location>
    </subcellularLocation>
    <text evidence="24">Preferentially localized to the Golgi apparatus.</text>
</comment>
<comment type="alternative products">
    <event type="alternative splicing"/>
    <isoform>
        <id>Q9Y5P4-1</id>
        <name>1</name>
        <name evidence="19">CERTL</name>
        <sequence type="displayed"/>
    </isoform>
    <isoform>
        <id>Q9Y5P4-2</id>
        <name>2</name>
        <name>Delta26</name>
        <name>GPBPD26</name>
        <name evidence="19">CERT</name>
        <sequence type="described" ref="VSP_006276"/>
    </isoform>
    <isoform>
        <id>Q9Y5P4-3</id>
        <name>3</name>
        <sequence type="described" ref="VSP_041022"/>
    </isoform>
</comment>
<comment type="tissue specificity">
    <text>Widely expressed.</text>
</comment>
<comment type="domain">
    <text evidence="7">The START domain recognizes ceramides and diacylglycerol lipids, interacts with membranes, and mediates the intermembrane transfer of ceramides and diacylglycerol lipids.</text>
</comment>
<comment type="domain">
    <text evidence="8">The PH domain targets the Golgi apparatus.</text>
</comment>
<comment type="domain">
    <text evidence="8 16">The FFAT motif is required for interaction with VAPA, VAPB and MOSPD2.</text>
</comment>
<comment type="PTM">
    <text evidence="9 11">Phosphorylation on Ser-132 decreases the affinity toward phosphatidylinositol 4-phosphate at Golgi membranes and reduces ceramide transfer activity. Inactivated by hyperphosphorylation of serine residues by CSNK1G2/CK1 that triggers dissociation from the Golgi complex, thus down-regulating ER-to-Golgi transport of ceramide and sphingomyelin synthesis.</text>
</comment>
<comment type="disease" evidence="14 15">
    <disease id="DI-04418">
        <name>Neurodevelopmental disorder with hypotonia, speech delay, and dysmorphic facies</name>
        <acronym>NEDHSF</acronym>
        <description>An autosomal dominant disorder characterized by mild to profound developmental delay with hypotonia, delayed motor skills, impaired intellectual development, poor or absent speech, and behavioral abnormalities. Some patients are non-verbal and non-ambulatory. Additional features may include early feeding difficulties, poor overall growth, seizures, brain imaging abnormalities, and dysmorphic facial features.</description>
        <dbReference type="MIM" id="616351"/>
    </disease>
    <text>The disease is caused by variants affecting the gene represented in this entry.</text>
</comment>
<comment type="caution">
    <text evidence="23">Was originally reported to have a protein kinase activity and to phosphorylate on Ser and Thr residues the Goodpasture autoantigen (in vitro).</text>
</comment>
<accession>Q9Y5P4</accession>
<accession>A8K7S2</accession>
<accession>B3KUB7</accession>
<accession>Q53YV1</accession>
<accession>Q53YV2</accession>
<accession>Q96Q85</accession>
<accession>Q96Q88</accession>
<accession>Q9H2S7</accession>
<accession>Q9H2S8</accession>
<evidence type="ECO:0000250" key="1">
    <source>
        <dbReference type="UniProtKB" id="Q6VVX2"/>
    </source>
</evidence>
<evidence type="ECO:0000250" key="2">
    <source>
        <dbReference type="UniProtKB" id="Q9EQG9"/>
    </source>
</evidence>
<evidence type="ECO:0000255" key="3"/>
<evidence type="ECO:0000255" key="4">
    <source>
        <dbReference type="PROSITE-ProRule" id="PRU00145"/>
    </source>
</evidence>
<evidence type="ECO:0000255" key="5">
    <source>
        <dbReference type="PROSITE-ProRule" id="PRU00197"/>
    </source>
</evidence>
<evidence type="ECO:0000256" key="6">
    <source>
        <dbReference type="SAM" id="MobiDB-lite"/>
    </source>
</evidence>
<evidence type="ECO:0000269" key="7">
    <source>
    </source>
</evidence>
<evidence type="ECO:0000269" key="8">
    <source>
    </source>
</evidence>
<evidence type="ECO:0000269" key="9">
    <source>
    </source>
</evidence>
<evidence type="ECO:0000269" key="10">
    <source>
    </source>
</evidence>
<evidence type="ECO:0000269" key="11">
    <source>
    </source>
</evidence>
<evidence type="ECO:0000269" key="12">
    <source>
    </source>
</evidence>
<evidence type="ECO:0000269" key="13">
    <source>
    </source>
</evidence>
<evidence type="ECO:0000269" key="14">
    <source>
    </source>
</evidence>
<evidence type="ECO:0000269" key="15">
    <source>
    </source>
</evidence>
<evidence type="ECO:0000269" key="16">
    <source>
    </source>
</evidence>
<evidence type="ECO:0000303" key="17">
    <source>
    </source>
</evidence>
<evidence type="ECO:0000303" key="18">
    <source>
    </source>
</evidence>
<evidence type="ECO:0000303" key="19">
    <source>
    </source>
</evidence>
<evidence type="ECO:0000303" key="20">
    <source>
    </source>
</evidence>
<evidence type="ECO:0000303" key="21">
    <source>
    </source>
</evidence>
<evidence type="ECO:0000305" key="22"/>
<evidence type="ECO:0000305" key="23">
    <source>
    </source>
</evidence>
<evidence type="ECO:0000305" key="24">
    <source>
    </source>
</evidence>
<evidence type="ECO:0000312" key="25">
    <source>
        <dbReference type="HGNC" id="HGNC:2205"/>
    </source>
</evidence>
<evidence type="ECO:0007744" key="26">
    <source>
    </source>
</evidence>
<evidence type="ECO:0007744" key="27">
    <source>
    </source>
</evidence>
<evidence type="ECO:0007744" key="28">
    <source>
    </source>
</evidence>
<evidence type="ECO:0007829" key="29">
    <source>
        <dbReference type="PDB" id="2E3M"/>
    </source>
</evidence>
<evidence type="ECO:0007829" key="30">
    <source>
        <dbReference type="PDB" id="2E3N"/>
    </source>
</evidence>
<evidence type="ECO:0007829" key="31">
    <source>
        <dbReference type="PDB" id="2E3O"/>
    </source>
</evidence>
<evidence type="ECO:0007829" key="32">
    <source>
        <dbReference type="PDB" id="2E3Q"/>
    </source>
</evidence>
<evidence type="ECO:0007829" key="33">
    <source>
        <dbReference type="PDB" id="3H3S"/>
    </source>
</evidence>
<evidence type="ECO:0007829" key="34">
    <source>
        <dbReference type="PDB" id="4HHV"/>
    </source>
</evidence>
<feature type="chain" id="PRO_0000220665" description="Ceramide transfer protein">
    <location>
        <begin position="1"/>
        <end position="624"/>
    </location>
</feature>
<feature type="domain" description="PH" evidence="4">
    <location>
        <begin position="23"/>
        <end position="117"/>
    </location>
</feature>
<feature type="domain" description="START" evidence="5">
    <location>
        <begin position="389"/>
        <end position="618"/>
    </location>
</feature>
<feature type="region of interest" description="Disordered" evidence="6">
    <location>
        <begin position="1"/>
        <end position="24"/>
    </location>
</feature>
<feature type="coiled-coil region" evidence="3">
    <location>
        <begin position="263"/>
        <end position="303"/>
    </location>
</feature>
<feature type="short sequence motif" description="FFAT" evidence="8 16">
    <location>
        <begin position="321"/>
        <end position="327"/>
    </location>
</feature>
<feature type="compositionally biased region" description="Polar residues" evidence="6">
    <location>
        <begin position="1"/>
        <end position="11"/>
    </location>
</feature>
<feature type="binding site" evidence="10 12">
    <location>
        <position position="472"/>
    </location>
    <ligand>
        <name>an N-acylsphing-4-enine</name>
        <dbReference type="ChEBI" id="CHEBI:52639"/>
    </ligand>
</feature>
<feature type="binding site" evidence="10 12">
    <location>
        <position position="493"/>
    </location>
    <ligand>
        <name>an N-acylsphing-4-enine</name>
        <dbReference type="ChEBI" id="CHEBI:52639"/>
    </ligand>
</feature>
<feature type="binding site" evidence="10 12">
    <location>
        <position position="530"/>
    </location>
    <ligand>
        <name>an N-acylsphing-4-enine</name>
        <dbReference type="ChEBI" id="CHEBI:52639"/>
    </ligand>
</feature>
<feature type="binding site" evidence="10 12">
    <location>
        <position position="579"/>
    </location>
    <ligand>
        <name>an N-acylsphing-4-enine</name>
        <dbReference type="ChEBI" id="CHEBI:52639"/>
    </ligand>
</feature>
<feature type="modified residue" description="Phosphoserine" evidence="28">
    <location>
        <position position="126"/>
    </location>
</feature>
<feature type="modified residue" description="Phosphoserine; by PKD" evidence="9">
    <location>
        <position position="132"/>
    </location>
</feature>
<feature type="modified residue" description="Phosphoserine" evidence="2">
    <location>
        <position position="135"/>
    </location>
</feature>
<feature type="modified residue" description="Phosphoserine" evidence="26">
    <location>
        <position position="315"/>
    </location>
</feature>
<feature type="modified residue" description="Phosphotyrosine" evidence="28">
    <location>
        <position position="372"/>
    </location>
</feature>
<feature type="modified residue" description="Phosphoserine" evidence="28">
    <location>
        <position position="373"/>
    </location>
</feature>
<feature type="modified residue" description="Phosphoserine" evidence="27">
    <location>
        <position position="377"/>
    </location>
</feature>
<feature type="modified residue" description="Phosphoserine" evidence="28">
    <location>
        <position position="380"/>
    </location>
</feature>
<feature type="splice variant" id="VSP_041022" description="In isoform 3." evidence="20">
    <original>M</original>
    <variation>MQHSCIPTPPSPFSAPPAFLPVVTRESRRGLSSGGSAGRNAGVTATAAAADGWKGRLPSPLVLLPRSARCQARRRRGGRTSSLLLLPPTPERALFASPSPDPSPRGLGASSGAAEGAGAGLLLGCRASM</variation>
    <location>
        <position position="1"/>
    </location>
</feature>
<feature type="splice variant" id="VSP_006276" description="In isoform 2." evidence="18 19 20 21">
    <location>
        <begin position="371"/>
        <end position="396"/>
    </location>
</feature>
<feature type="sequence variant" id="VAR_073721" description="In NEDHSF; dbSNP:rs1064794019." evidence="15">
    <original>S</original>
    <variation>L</variation>
    <location>
        <position position="132"/>
    </location>
</feature>
<feature type="sequence variant" id="VAR_069403" description="Found in a patient with intellectual disability." evidence="13">
    <original>S</original>
    <variation>C</variation>
    <location>
        <position position="138"/>
    </location>
</feature>
<feature type="sequence variant" id="VAR_078652" description="In NEDHSF." evidence="14">
    <original>G</original>
    <variation>R</variation>
    <location>
        <position position="243"/>
    </location>
</feature>
<feature type="sequence variant" id="VAR_061815" description="In dbSNP:rs55882089.">
    <original>K</original>
    <variation>R</variation>
    <location>
        <position position="599"/>
    </location>
</feature>
<feature type="mutagenesis site" description="Abolishes the phosphorylation. Strongly reduces the interaction with phosphatidylinositol 4-phosphate. Increases the ceramide transfer activity." evidence="9">
    <original>S</original>
    <variation>A</variation>
    <location>
        <position position="132"/>
    </location>
</feature>
<feature type="mutagenesis site" description="Impairs the endoplasmic reticulum-to-Golgi ceramide trafficking and abolishes the interaction with VAPA and MOSPD2." evidence="8 16">
    <original>D</original>
    <variation>A</variation>
    <location>
        <position position="324"/>
    </location>
</feature>
<feature type="mutagenesis site" description="Reduces ceramide transfer." evidence="10">
    <original>E</original>
    <variation>A</variation>
    <location>
        <position position="472"/>
    </location>
</feature>
<feature type="mutagenesis site" description="No effect on ceramide transfer activity." evidence="10">
    <original>Q</original>
    <variation>A</variation>
    <location>
        <position position="493"/>
    </location>
</feature>
<feature type="mutagenesis site" description="Reduces affinity for membranes. Abolishes ceramide transfer; when associated with A-588." evidence="12">
    <original>W</original>
    <variation>A</variation>
    <location>
        <position position="499"/>
    </location>
</feature>
<feature type="mutagenesis site" description="Reduces ceramide transfer." evidence="10">
    <original>N</original>
    <variation>A</variation>
    <location>
        <position position="530"/>
    </location>
</feature>
<feature type="mutagenesis site" description="Abolishes ceramide transfer; when associated with A-499.">
    <original>W</original>
    <variation>A</variation>
    <location>
        <position position="588"/>
    </location>
</feature>
<feature type="strand" evidence="34">
    <location>
        <begin position="26"/>
        <end position="33"/>
    </location>
</feature>
<feature type="turn" evidence="34">
    <location>
        <begin position="36"/>
        <end position="38"/>
    </location>
</feature>
<feature type="strand" evidence="34">
    <location>
        <begin position="40"/>
        <end position="48"/>
    </location>
</feature>
<feature type="strand" evidence="34">
    <location>
        <begin position="51"/>
        <end position="56"/>
    </location>
</feature>
<feature type="strand" evidence="34">
    <location>
        <begin position="58"/>
        <end position="62"/>
    </location>
</feature>
<feature type="strand" evidence="34">
    <location>
        <begin position="64"/>
        <end position="71"/>
    </location>
</feature>
<feature type="strand" evidence="34">
    <location>
        <begin position="75"/>
        <end position="78"/>
    </location>
</feature>
<feature type="strand" evidence="34">
    <location>
        <begin position="85"/>
        <end position="90"/>
    </location>
</feature>
<feature type="strand" evidence="34">
    <location>
        <begin position="93"/>
        <end position="98"/>
    </location>
</feature>
<feature type="helix" evidence="34">
    <location>
        <begin position="102"/>
        <end position="119"/>
    </location>
</feature>
<feature type="helix" evidence="30">
    <location>
        <begin position="397"/>
        <end position="407"/>
    </location>
</feature>
<feature type="strand" evidence="29">
    <location>
        <begin position="413"/>
        <end position="415"/>
    </location>
</feature>
<feature type="strand" evidence="30">
    <location>
        <begin position="418"/>
        <end position="424"/>
    </location>
</feature>
<feature type="strand" evidence="30">
    <location>
        <begin position="427"/>
        <end position="432"/>
    </location>
</feature>
<feature type="strand" evidence="30">
    <location>
        <begin position="444"/>
        <end position="451"/>
    </location>
</feature>
<feature type="helix" evidence="30">
    <location>
        <begin position="455"/>
        <end position="463"/>
    </location>
</feature>
<feature type="helix" evidence="30">
    <location>
        <begin position="465"/>
        <end position="467"/>
    </location>
</feature>
<feature type="helix" evidence="30">
    <location>
        <begin position="468"/>
        <end position="471"/>
    </location>
</feature>
<feature type="strand" evidence="30">
    <location>
        <begin position="474"/>
        <end position="485"/>
    </location>
</feature>
<feature type="strand" evidence="30">
    <location>
        <begin position="488"/>
        <end position="495"/>
    </location>
</feature>
<feature type="strand" evidence="33">
    <location>
        <begin position="499"/>
        <end position="502"/>
    </location>
</feature>
<feature type="strand" evidence="30">
    <location>
        <begin position="504"/>
        <end position="515"/>
    </location>
</feature>
<feature type="strand" evidence="31">
    <location>
        <begin position="518"/>
        <end position="522"/>
    </location>
</feature>
<feature type="strand" evidence="30">
    <location>
        <begin position="525"/>
        <end position="532"/>
    </location>
</feature>
<feature type="strand" evidence="30">
    <location>
        <begin position="542"/>
        <end position="546"/>
    </location>
</feature>
<feature type="strand" evidence="30">
    <location>
        <begin position="548"/>
        <end position="559"/>
    </location>
</feature>
<feature type="strand" evidence="33">
    <location>
        <begin position="563"/>
        <end position="565"/>
    </location>
</feature>
<feature type="helix" evidence="30">
    <location>
        <begin position="570"/>
        <end position="572"/>
    </location>
</feature>
<feature type="strand" evidence="30">
    <location>
        <begin position="573"/>
        <end position="584"/>
    </location>
</feature>
<feature type="helix" evidence="30">
    <location>
        <begin position="591"/>
        <end position="617"/>
    </location>
</feature>
<feature type="strand" evidence="32">
    <location>
        <begin position="618"/>
        <end position="620"/>
    </location>
</feature>
<sequence length="624" mass="70835">MSDNQSWNSSGSEEDPETESGPPVERCGVLSKWTNYIHGWQDRWVVLKNNALSYYKSEDETEYGCRGSICLSKAVITPHDFDECRFDISVNDSVWYLRAQDPDHRQQWIDAIEQHKTESGYGSESSLRRHGSMVSLVSGASGYSATSTSSFKKGHSLREKLAEMETFRDILCRQVDTLQKYFDACADAVSKDELQRDKVVEDDEDDFPTTRSDGDFLHSTNGNKEKLFPHVTPKGINGIDFKGEAITFKATTAGILATLSHCIELMVKREDSWQKRLDKETEKKRRTEEAYKNAMTELKKKSHFGGPDYEEGPNSLINEEEFFDAVEAALDRQDKIEEQSQSEKVRLHWPTSLPSGDAFSSVGTHRFVQKPYSRSSSMSSIDLVSASDDVHRFSSQVEEMVQNHMTYSLQDVGGDANWQLVVEEGEMKVYRREVEENGIVLDPLKATHAVKGVTGHEVCNYFWNVDVRNDWETTIENFHVVETLADNAIIIYQTHKRVWPASQRDVLYLSVIRKIPALTENDPETWIVCNFSVDHDSAPLNNRCVRAKINVAMICQTLVSPPEGNQEISRDNILCKITYVANVNPGGWAPASVLRAVAKREYPKFLKRFTSYVQEKTAGKPILF</sequence>
<reference key="1">
    <citation type="journal article" date="1999" name="J. Biol. Chem.">
        <title>Characterization of a novel type of serine/threonine kinase that specifically phosphorylates the human goodpasture antigen.</title>
        <authorList>
            <person name="Raya A."/>
            <person name="Revert F."/>
            <person name="Navarro S."/>
            <person name="Saus J."/>
        </authorList>
    </citation>
    <scope>NUCLEOTIDE SEQUENCE [MRNA] (ISOFORM 1)</scope>
    <scope>CHARACTERIZATION</scope>
</reference>
<reference key="2">
    <citation type="journal article" date="2000" name="J. Biol. Chem.">
        <title>Goodpasture antigen-binding protein, the kinase that phosphorylates the Goodpasture antigen, is an alternatively spliced variant implicated in autoimmune pathogenesis.</title>
        <authorList>
            <person name="Raya A."/>
            <person name="Revert-Ros F."/>
            <person name="Martinez-Martinez P."/>
            <person name="Navarro S."/>
            <person name="Rosello E."/>
            <person name="Vieites B."/>
            <person name="Granero F."/>
            <person name="Forteza J."/>
            <person name="Saus J."/>
        </authorList>
    </citation>
    <scope>NUCLEOTIDE SEQUENCE [GENOMIC DNA / MRNA] (ISOFORMS 1 AND 2)</scope>
</reference>
<reference key="3">
    <citation type="journal article" date="2003" name="Nature">
        <title>Molecular machinery for non-vesicular trafficking of ceramide.</title>
        <authorList>
            <person name="Hanada K."/>
            <person name="Kumagai K."/>
            <person name="Yasuda S."/>
            <person name="Miura Y."/>
            <person name="Kawano M."/>
            <person name="Fukasawa M."/>
            <person name="Nishijima M."/>
        </authorList>
    </citation>
    <scope>NUCLEOTIDE SEQUENCE [MRNA] (ISOFORMS 1 AND 2)</scope>
    <scope>FUNCTION</scope>
    <scope>DOMAIN START</scope>
</reference>
<reference key="4">
    <citation type="journal article" date="2004" name="Nat. Genet.">
        <title>Complete sequencing and characterization of 21,243 full-length human cDNAs.</title>
        <authorList>
            <person name="Ota T."/>
            <person name="Suzuki Y."/>
            <person name="Nishikawa T."/>
            <person name="Otsuki T."/>
            <person name="Sugiyama T."/>
            <person name="Irie R."/>
            <person name="Wakamatsu A."/>
            <person name="Hayashi K."/>
            <person name="Sato H."/>
            <person name="Nagai K."/>
            <person name="Kimura K."/>
            <person name="Makita H."/>
            <person name="Sekine M."/>
            <person name="Obayashi M."/>
            <person name="Nishi T."/>
            <person name="Shibahara T."/>
            <person name="Tanaka T."/>
            <person name="Ishii S."/>
            <person name="Yamamoto J."/>
            <person name="Saito K."/>
            <person name="Kawai Y."/>
            <person name="Isono Y."/>
            <person name="Nakamura Y."/>
            <person name="Nagahari K."/>
            <person name="Murakami K."/>
            <person name="Yasuda T."/>
            <person name="Iwayanagi T."/>
            <person name="Wagatsuma M."/>
            <person name="Shiratori A."/>
            <person name="Sudo H."/>
            <person name="Hosoiri T."/>
            <person name="Kaku Y."/>
            <person name="Kodaira H."/>
            <person name="Kondo H."/>
            <person name="Sugawara M."/>
            <person name="Takahashi M."/>
            <person name="Kanda K."/>
            <person name="Yokoi T."/>
            <person name="Furuya T."/>
            <person name="Kikkawa E."/>
            <person name="Omura Y."/>
            <person name="Abe K."/>
            <person name="Kamihara K."/>
            <person name="Katsuta N."/>
            <person name="Sato K."/>
            <person name="Tanikawa M."/>
            <person name="Yamazaki M."/>
            <person name="Ninomiya K."/>
            <person name="Ishibashi T."/>
            <person name="Yamashita H."/>
            <person name="Murakawa K."/>
            <person name="Fujimori K."/>
            <person name="Tanai H."/>
            <person name="Kimata M."/>
            <person name="Watanabe M."/>
            <person name="Hiraoka S."/>
            <person name="Chiba Y."/>
            <person name="Ishida S."/>
            <person name="Ono Y."/>
            <person name="Takiguchi S."/>
            <person name="Watanabe S."/>
            <person name="Yosida M."/>
            <person name="Hotuta T."/>
            <person name="Kusano J."/>
            <person name="Kanehori K."/>
            <person name="Takahashi-Fujii A."/>
            <person name="Hara H."/>
            <person name="Tanase T.-O."/>
            <person name="Nomura Y."/>
            <person name="Togiya S."/>
            <person name="Komai F."/>
            <person name="Hara R."/>
            <person name="Takeuchi K."/>
            <person name="Arita M."/>
            <person name="Imose N."/>
            <person name="Musashino K."/>
            <person name="Yuuki H."/>
            <person name="Oshima A."/>
            <person name="Sasaki N."/>
            <person name="Aotsuka S."/>
            <person name="Yoshikawa Y."/>
            <person name="Matsunawa H."/>
            <person name="Ichihara T."/>
            <person name="Shiohata N."/>
            <person name="Sano S."/>
            <person name="Moriya S."/>
            <person name="Momiyama H."/>
            <person name="Satoh N."/>
            <person name="Takami S."/>
            <person name="Terashima Y."/>
            <person name="Suzuki O."/>
            <person name="Nakagawa S."/>
            <person name="Senoh A."/>
            <person name="Mizoguchi H."/>
            <person name="Goto Y."/>
            <person name="Shimizu F."/>
            <person name="Wakebe H."/>
            <person name="Hishigaki H."/>
            <person name="Watanabe T."/>
            <person name="Sugiyama A."/>
            <person name="Takemoto M."/>
            <person name="Kawakami B."/>
            <person name="Yamazaki M."/>
            <person name="Watanabe K."/>
            <person name="Kumagai A."/>
            <person name="Itakura S."/>
            <person name="Fukuzumi Y."/>
            <person name="Fujimori Y."/>
            <person name="Komiyama M."/>
            <person name="Tashiro H."/>
            <person name="Tanigami A."/>
            <person name="Fujiwara T."/>
            <person name="Ono T."/>
            <person name="Yamada K."/>
            <person name="Fujii Y."/>
            <person name="Ozaki K."/>
            <person name="Hirao M."/>
            <person name="Ohmori Y."/>
            <person name="Kawabata A."/>
            <person name="Hikiji T."/>
            <person name="Kobatake N."/>
            <person name="Inagaki H."/>
            <person name="Ikema Y."/>
            <person name="Okamoto S."/>
            <person name="Okitani R."/>
            <person name="Kawakami T."/>
            <person name="Noguchi S."/>
            <person name="Itoh T."/>
            <person name="Shigeta K."/>
            <person name="Senba T."/>
            <person name="Matsumura K."/>
            <person name="Nakajima Y."/>
            <person name="Mizuno T."/>
            <person name="Morinaga M."/>
            <person name="Sasaki M."/>
            <person name="Togashi T."/>
            <person name="Oyama M."/>
            <person name="Hata H."/>
            <person name="Watanabe M."/>
            <person name="Komatsu T."/>
            <person name="Mizushima-Sugano J."/>
            <person name="Satoh T."/>
            <person name="Shirai Y."/>
            <person name="Takahashi Y."/>
            <person name="Nakagawa K."/>
            <person name="Okumura K."/>
            <person name="Nagase T."/>
            <person name="Nomura N."/>
            <person name="Kikuchi H."/>
            <person name="Masuho Y."/>
            <person name="Yamashita R."/>
            <person name="Nakai K."/>
            <person name="Yada T."/>
            <person name="Nakamura Y."/>
            <person name="Ohara O."/>
            <person name="Isogai T."/>
            <person name="Sugano S."/>
        </authorList>
    </citation>
    <scope>NUCLEOTIDE SEQUENCE [LARGE SCALE MRNA] (ISOFORMS 2 AND 3)</scope>
    <source>
        <tissue>Lung</tissue>
        <tissue>Synovium</tissue>
    </source>
</reference>
<reference key="5">
    <citation type="journal article" date="2004" name="Nature">
        <title>The DNA sequence and comparative analysis of human chromosome 5.</title>
        <authorList>
            <person name="Schmutz J."/>
            <person name="Martin J."/>
            <person name="Terry A."/>
            <person name="Couronne O."/>
            <person name="Grimwood J."/>
            <person name="Lowry S."/>
            <person name="Gordon L.A."/>
            <person name="Scott D."/>
            <person name="Xie G."/>
            <person name="Huang W."/>
            <person name="Hellsten U."/>
            <person name="Tran-Gyamfi M."/>
            <person name="She X."/>
            <person name="Prabhakar S."/>
            <person name="Aerts A."/>
            <person name="Altherr M."/>
            <person name="Bajorek E."/>
            <person name="Black S."/>
            <person name="Branscomb E."/>
            <person name="Caoile C."/>
            <person name="Challacombe J.F."/>
            <person name="Chan Y.M."/>
            <person name="Denys M."/>
            <person name="Detter J.C."/>
            <person name="Escobar J."/>
            <person name="Flowers D."/>
            <person name="Fotopulos D."/>
            <person name="Glavina T."/>
            <person name="Gomez M."/>
            <person name="Gonzales E."/>
            <person name="Goodstein D."/>
            <person name="Grigoriev I."/>
            <person name="Groza M."/>
            <person name="Hammon N."/>
            <person name="Hawkins T."/>
            <person name="Haydu L."/>
            <person name="Israni S."/>
            <person name="Jett J."/>
            <person name="Kadner K."/>
            <person name="Kimball H."/>
            <person name="Kobayashi A."/>
            <person name="Lopez F."/>
            <person name="Lou Y."/>
            <person name="Martinez D."/>
            <person name="Medina C."/>
            <person name="Morgan J."/>
            <person name="Nandkeshwar R."/>
            <person name="Noonan J.P."/>
            <person name="Pitluck S."/>
            <person name="Pollard M."/>
            <person name="Predki P."/>
            <person name="Priest J."/>
            <person name="Ramirez L."/>
            <person name="Retterer J."/>
            <person name="Rodriguez A."/>
            <person name="Rogers S."/>
            <person name="Salamov A."/>
            <person name="Salazar A."/>
            <person name="Thayer N."/>
            <person name="Tice H."/>
            <person name="Tsai M."/>
            <person name="Ustaszewska A."/>
            <person name="Vo N."/>
            <person name="Wheeler J."/>
            <person name="Wu K."/>
            <person name="Yang J."/>
            <person name="Dickson M."/>
            <person name="Cheng J.-F."/>
            <person name="Eichler E.E."/>
            <person name="Olsen A."/>
            <person name="Pennacchio L.A."/>
            <person name="Rokhsar D.S."/>
            <person name="Richardson P."/>
            <person name="Lucas S.M."/>
            <person name="Myers R.M."/>
            <person name="Rubin E.M."/>
        </authorList>
    </citation>
    <scope>NUCLEOTIDE SEQUENCE [LARGE SCALE GENOMIC DNA]</scope>
</reference>
<reference key="6">
    <citation type="submission" date="2005-07" db="EMBL/GenBank/DDBJ databases">
        <authorList>
            <person name="Mural R.J."/>
            <person name="Istrail S."/>
            <person name="Sutton G.G."/>
            <person name="Florea L."/>
            <person name="Halpern A.L."/>
            <person name="Mobarry C.M."/>
            <person name="Lippert R."/>
            <person name="Walenz B."/>
            <person name="Shatkay H."/>
            <person name="Dew I."/>
            <person name="Miller J.R."/>
            <person name="Flanigan M.J."/>
            <person name="Edwards N.J."/>
            <person name="Bolanos R."/>
            <person name="Fasulo D."/>
            <person name="Halldorsson B.V."/>
            <person name="Hannenhalli S."/>
            <person name="Turner R."/>
            <person name="Yooseph S."/>
            <person name="Lu F."/>
            <person name="Nusskern D.R."/>
            <person name="Shue B.C."/>
            <person name="Zheng X.H."/>
            <person name="Zhong F."/>
            <person name="Delcher A.L."/>
            <person name="Huson D.H."/>
            <person name="Kravitz S.A."/>
            <person name="Mouchard L."/>
            <person name="Reinert K."/>
            <person name="Remington K.A."/>
            <person name="Clark A.G."/>
            <person name="Waterman M.S."/>
            <person name="Eichler E.E."/>
            <person name="Adams M.D."/>
            <person name="Hunkapiller M.W."/>
            <person name="Myers E.W."/>
            <person name="Venter J.C."/>
        </authorList>
    </citation>
    <scope>NUCLEOTIDE SEQUENCE [LARGE SCALE GENOMIC DNA]</scope>
</reference>
<reference key="7">
    <citation type="journal article" date="2004" name="Genome Res.">
        <title>The status, quality, and expansion of the NIH full-length cDNA project: the Mammalian Gene Collection (MGC).</title>
        <authorList>
            <consortium name="The MGC Project Team"/>
        </authorList>
    </citation>
    <scope>NUCLEOTIDE SEQUENCE [LARGE SCALE MRNA] (ISOFORM 2)</scope>
    <source>
        <tissue>Placenta</tissue>
    </source>
</reference>
<reference key="8">
    <citation type="submission" date="2000-01" db="EMBL/GenBank/DDBJ databases">
        <title>Homo sapiens genomic sequence, containing DINB1 and GPBP gene.</title>
        <authorList>
            <person name="Ogi T."/>
            <person name="Yamamoto Y."/>
            <person name="Ohmori H."/>
        </authorList>
    </citation>
    <scope>NUCLEOTIDE SEQUENCE [GENOMIC DNA] OF 1-77</scope>
</reference>
<reference key="9">
    <citation type="journal article" date="2006" name="Cell">
        <title>Global, in vivo, and site-specific phosphorylation dynamics in signaling networks.</title>
        <authorList>
            <person name="Olsen J.V."/>
            <person name="Blagoev B."/>
            <person name="Gnad F."/>
            <person name="Macek B."/>
            <person name="Kumar C."/>
            <person name="Mortensen P."/>
            <person name="Mann M."/>
        </authorList>
    </citation>
    <scope>PHOSPHORYLATION [LARGE SCALE ANALYSIS] AT SER-315</scope>
    <scope>IDENTIFICATION BY MASS SPECTROMETRY [LARGE SCALE ANALYSIS]</scope>
    <source>
        <tissue>Cervix carcinoma</tissue>
    </source>
</reference>
<reference key="10">
    <citation type="journal article" date="2006" name="J. Biol. Chem.">
        <title>Efficient trafficking of ceramide from the endoplasmic reticulum to the Golgi apparatus requires a VAMP-associated protein-interacting FFAT motif of CERT.</title>
        <authorList>
            <person name="Kawano M."/>
            <person name="Kumagai K."/>
            <person name="Nishijima M."/>
            <person name="Hanada K."/>
        </authorList>
    </citation>
    <scope>INTERACTION WITH VAPA AND VAPB</scope>
    <scope>SUBCELLULAR LOCATION</scope>
    <scope>MUTAGENESIS OF ASP-324</scope>
    <scope>DOMAIN FFAT MOTIF</scope>
    <scope>DOMAIN PH</scope>
</reference>
<reference key="11">
    <citation type="journal article" date="2007" name="J. Cell Biol.">
        <title>Regulation of secretory transport by protein kinase D-mediated phosphorylation of the ceramide transfer protein.</title>
        <authorList>
            <person name="Fugmann T."/>
            <person name="Hausser A."/>
            <person name="Schoeffler P."/>
            <person name="Schmid S."/>
            <person name="Pfizenmaier K."/>
            <person name="Olayioye M.A."/>
        </authorList>
    </citation>
    <scope>PHOSPHORYLATION AT SER-132</scope>
    <scope>FUNCTION</scope>
    <scope>MUTAGENESIS OF SER-132</scope>
</reference>
<reference key="12">
    <citation type="journal article" date="2008" name="Proc. Natl. Acad. Sci. U.S.A.">
        <title>A quantitative atlas of mitotic phosphorylation.</title>
        <authorList>
            <person name="Dephoure N."/>
            <person name="Zhou C."/>
            <person name="Villen J."/>
            <person name="Beausoleil S.A."/>
            <person name="Bakalarski C.E."/>
            <person name="Elledge S.J."/>
            <person name="Gygi S.P."/>
        </authorList>
    </citation>
    <scope>PHOSPHORYLATION [LARGE SCALE ANALYSIS] AT SER-377</scope>
    <scope>IDENTIFICATION BY MASS SPECTROMETRY [LARGE SCALE ANALYSIS]</scope>
    <source>
        <tissue>Cervix carcinoma</tissue>
    </source>
</reference>
<reference key="13">
    <citation type="journal article" date="2009" name="Mol. Biol. Cell">
        <title>Casein kinase I{gamma}2 down-regulates trafficking of ceramide in the synthesis of sphingomyelin.</title>
        <authorList>
            <person name="Tomishige N."/>
            <person name="Kumagai K."/>
            <person name="Kusuda J."/>
            <person name="Nishijima M."/>
            <person name="Hanada K."/>
        </authorList>
    </citation>
    <scope>PHOSPHORYLATION BY CSNK1G2/CK1</scope>
</reference>
<reference key="14">
    <citation type="journal article" date="2009" name="Sci. Signal.">
        <title>Quantitative phosphoproteomic analysis of T cell receptor signaling reveals system-wide modulation of protein-protein interactions.</title>
        <authorList>
            <person name="Mayya V."/>
            <person name="Lundgren D.H."/>
            <person name="Hwang S.-I."/>
            <person name="Rezaul K."/>
            <person name="Wu L."/>
            <person name="Eng J.K."/>
            <person name="Rodionov V."/>
            <person name="Han D.K."/>
        </authorList>
    </citation>
    <scope>IDENTIFICATION BY MASS SPECTROMETRY [LARGE SCALE ANALYSIS]</scope>
    <source>
        <tissue>Leukemic T-cell</tissue>
    </source>
</reference>
<reference key="15">
    <citation type="journal article" date="2011" name="BMC Syst. Biol.">
        <title>Initial characterization of the human central proteome.</title>
        <authorList>
            <person name="Burkard T.R."/>
            <person name="Planyavsky M."/>
            <person name="Kaupe I."/>
            <person name="Breitwieser F.P."/>
            <person name="Buerckstuemmer T."/>
            <person name="Bennett K.L."/>
            <person name="Superti-Furga G."/>
            <person name="Colinge J."/>
        </authorList>
    </citation>
    <scope>IDENTIFICATION BY MASS SPECTROMETRY [LARGE SCALE ANALYSIS]</scope>
</reference>
<reference key="16">
    <citation type="journal article" date="2013" name="J. Proteome Res.">
        <title>Toward a comprehensive characterization of a human cancer cell phosphoproteome.</title>
        <authorList>
            <person name="Zhou H."/>
            <person name="Di Palma S."/>
            <person name="Preisinger C."/>
            <person name="Peng M."/>
            <person name="Polat A.N."/>
            <person name="Heck A.J."/>
            <person name="Mohammed S."/>
        </authorList>
    </citation>
    <scope>PHOSPHORYLATION [LARGE SCALE ANALYSIS] AT SER-126; TYR-372; SER-373 AND SER-380</scope>
    <scope>IDENTIFICATION BY MASS SPECTROMETRY [LARGE SCALE ANALYSIS]</scope>
    <source>
        <tissue>Cervix carcinoma</tissue>
        <tissue>Erythroleukemia</tissue>
    </source>
</reference>
<reference key="17">
    <citation type="journal article" date="2014" name="J. Proteomics">
        <title>An enzyme assisted RP-RPLC approach for in-depth analysis of human liver phosphoproteome.</title>
        <authorList>
            <person name="Bian Y."/>
            <person name="Song C."/>
            <person name="Cheng K."/>
            <person name="Dong M."/>
            <person name="Wang F."/>
            <person name="Huang J."/>
            <person name="Sun D."/>
            <person name="Wang L."/>
            <person name="Ye M."/>
            <person name="Zou H."/>
        </authorList>
    </citation>
    <scope>IDENTIFICATION BY MASS SPECTROMETRY [LARGE SCALE ANALYSIS]</scope>
    <source>
        <tissue>Liver</tissue>
    </source>
</reference>
<reference key="18">
    <citation type="journal article" date="2015" name="Nature">
        <title>Large-scale discovery of novel genetic causes of developmental disorders.</title>
        <authorList>
            <consortium name="Deciphering Developmental Disorders Study"/>
        </authorList>
    </citation>
    <scope>INVOLVEMENT IN NEDHSF</scope>
    <scope>VARIANT NEDHSF LEU-132</scope>
</reference>
<reference key="19">
    <citation type="journal article" date="2018" name="EMBO Rep.">
        <title>Identification of MOSPD2, a novel scaffold for endoplasmic reticulum membrane contact sites.</title>
        <authorList>
            <person name="Di Mattia T."/>
            <person name="Wilhelm L.P."/>
            <person name="Ikhlef S."/>
            <person name="Wendling C."/>
            <person name="Spehner D."/>
            <person name="Nomine Y."/>
            <person name="Giordano F."/>
            <person name="Mathelin C."/>
            <person name="Drin G."/>
            <person name="Tomasetto C."/>
            <person name="Alpy F."/>
        </authorList>
    </citation>
    <scope>IDENTIFICATION BY MASS SPECTROMETRY</scope>
    <scope>INTERACTION WITH MOSPD2</scope>
    <scope>SUBCELLULAR LOCATION</scope>
    <scope>DOMAIN</scope>
    <scope>FFAT MOTIF</scope>
    <scope>MUTAGENESIS OF ASP-324</scope>
</reference>
<reference key="20">
    <citation type="journal article" date="2008" name="Proc. Natl. Acad. Sci. U.S.A.">
        <title>Structural basis for specific lipid recognition by CERT responsible for nonvesicular trafficking of ceramide.</title>
        <authorList>
            <person name="Kudo N."/>
            <person name="Kumagai K."/>
            <person name="Tomishige N."/>
            <person name="Yamaji T."/>
            <person name="Wakatsuki S."/>
            <person name="Nishijima M."/>
            <person name="Hanada K."/>
            <person name="Kato R."/>
        </authorList>
    </citation>
    <scope>X-RAY CRYSTALLOGRAPHY (1.4 ANGSTROMS) OF 347-624 IN COMPLEXES WITH CERAMIDES AND DIACYLGLYCEROL</scope>
    <scope>MUTAGENESIS OF GLU-472; GLN-493 AND ASN-530</scope>
    <scope>FUNCTION</scope>
    <scope>SUBCELLULAR LOCATION</scope>
    <scope>CERAMIDE-BINDING</scope>
</reference>
<reference key="21">
    <citation type="journal article" date="2010" name="J. Mol. Biol.">
        <title>Crystal structures of the CERT START domain with inhibitors provide insights into the mechanism of ceramide transfer.</title>
        <authorList>
            <person name="Kudo N."/>
            <person name="Kumagai K."/>
            <person name="Matsubara R."/>
            <person name="Kobayashi S."/>
            <person name="Hanada K."/>
            <person name="Wakatsuki S."/>
            <person name="Kato R."/>
        </authorList>
    </citation>
    <scope>X-RAY CRYSTALLOGRAPHY (1.66 ANGSTROMS) OF 347-624 IN COMPLEXES WITH CERAMIDE AND INHIBITOR</scope>
    <scope>MUTAGENESIS OF TRP-499</scope>
    <scope>FUNCTION</scope>
    <scope>CERAMIDE-BINDING</scope>
</reference>
<reference key="22">
    <citation type="journal article" date="2012" name="N. Engl. J. Med.">
        <title>Diagnostic exome sequencing in persons with severe intellectual disability.</title>
        <authorList>
            <person name="de Ligt J."/>
            <person name="Willemsen M.H."/>
            <person name="van Bon B.W."/>
            <person name="Kleefstra T."/>
            <person name="Yntema H.G."/>
            <person name="Kroes T."/>
            <person name="Vulto-van Silfhout A.T."/>
            <person name="Koolen D.A."/>
            <person name="de Vries P."/>
            <person name="Gilissen C."/>
            <person name="del Rosario M."/>
            <person name="Hoischen A."/>
            <person name="Scheffer H."/>
            <person name="de Vries B.B."/>
            <person name="Brunner H.G."/>
            <person name="Veltman J.A."/>
            <person name="Vissers L.E."/>
        </authorList>
    </citation>
    <scope>VARIANT CYS-138</scope>
</reference>
<reference key="23">
    <citation type="journal article" date="2014" name="PLoS Genet.">
        <title>De novo mutations in moderate or severe intellectual disability.</title>
        <authorList>
            <person name="Hamdan F.F."/>
            <person name="Srour M."/>
            <person name="Capo-Chichi J.M."/>
            <person name="Daoud H."/>
            <person name="Nassif C."/>
            <person name="Patry L."/>
            <person name="Massicotte C."/>
            <person name="Ambalavanan A."/>
            <person name="Spiegelman D."/>
            <person name="Diallo O."/>
            <person name="Henrion E."/>
            <person name="Dionne-Laporte A."/>
            <person name="Fougerat A."/>
            <person name="Pshezhetsky A.V."/>
            <person name="Venkateswaran S."/>
            <person name="Rouleau G.A."/>
            <person name="Michaud J.L."/>
        </authorList>
    </citation>
    <scope>VARIANT NEDHSF ARG-243</scope>
</reference>